<comment type="similarity">
    <text evidence="1">Belongs to the UPF0102 family.</text>
</comment>
<protein>
    <recommendedName>
        <fullName evidence="1">UPF0102 protein DehaBAV1_0707</fullName>
    </recommendedName>
</protein>
<accession>A5FR87</accession>
<evidence type="ECO:0000255" key="1">
    <source>
        <dbReference type="HAMAP-Rule" id="MF_00048"/>
    </source>
</evidence>
<organism>
    <name type="scientific">Dehalococcoides mccartyi (strain ATCC BAA-2100 / JCM 16839 / KCTC 5957 / BAV1)</name>
    <dbReference type="NCBI Taxonomy" id="216389"/>
    <lineage>
        <taxon>Bacteria</taxon>
        <taxon>Bacillati</taxon>
        <taxon>Chloroflexota</taxon>
        <taxon>Dehalococcoidia</taxon>
        <taxon>Dehalococcoidales</taxon>
        <taxon>Dehalococcoidaceae</taxon>
        <taxon>Dehalococcoides</taxon>
    </lineage>
</organism>
<feature type="chain" id="PRO_1000074811" description="UPF0102 protein DehaBAV1_0707">
    <location>
        <begin position="1"/>
        <end position="121"/>
    </location>
</feature>
<proteinExistence type="inferred from homology"/>
<name>Y707_DEHMB</name>
<gene>
    <name type="ordered locus">DehaBAV1_0707</name>
</gene>
<sequence>MAYNRKETGEFGEKLAAEYLKGMGYSIIQTNCRLPEGEIDIVGQDGEYLVFIEVRTKRRLGYGLPAESVTPRKKAHLMASAESYIQKHRLEHFPCRIDFVSVDLSQPEPRLELIKNALGEE</sequence>
<dbReference type="EMBL" id="CP000688">
    <property type="protein sequence ID" value="ABQ17291.1"/>
    <property type="molecule type" value="Genomic_DNA"/>
</dbReference>
<dbReference type="SMR" id="A5FR87"/>
<dbReference type="KEGG" id="deb:DehaBAV1_0707"/>
<dbReference type="PATRIC" id="fig|216389.18.peg.756"/>
<dbReference type="HOGENOM" id="CLU_115353_2_1_0"/>
<dbReference type="GO" id="GO:0003676">
    <property type="term" value="F:nucleic acid binding"/>
    <property type="evidence" value="ECO:0007669"/>
    <property type="project" value="InterPro"/>
</dbReference>
<dbReference type="CDD" id="cd20736">
    <property type="entry name" value="PoNe_Nuclease"/>
    <property type="match status" value="1"/>
</dbReference>
<dbReference type="Gene3D" id="3.40.1350.10">
    <property type="match status" value="1"/>
</dbReference>
<dbReference type="HAMAP" id="MF_00048">
    <property type="entry name" value="UPF0102"/>
    <property type="match status" value="1"/>
</dbReference>
<dbReference type="InterPro" id="IPR011335">
    <property type="entry name" value="Restrct_endonuc-II-like"/>
</dbReference>
<dbReference type="InterPro" id="IPR011856">
    <property type="entry name" value="tRNA_endonuc-like_dom_sf"/>
</dbReference>
<dbReference type="InterPro" id="IPR003509">
    <property type="entry name" value="UPF0102_YraN-like"/>
</dbReference>
<dbReference type="NCBIfam" id="NF009150">
    <property type="entry name" value="PRK12497.1-3"/>
    <property type="match status" value="1"/>
</dbReference>
<dbReference type="NCBIfam" id="NF011280">
    <property type="entry name" value="PRK14688.1"/>
    <property type="match status" value="1"/>
</dbReference>
<dbReference type="NCBIfam" id="TIGR00252">
    <property type="entry name" value="YraN family protein"/>
    <property type="match status" value="1"/>
</dbReference>
<dbReference type="PANTHER" id="PTHR34039">
    <property type="entry name" value="UPF0102 PROTEIN YRAN"/>
    <property type="match status" value="1"/>
</dbReference>
<dbReference type="PANTHER" id="PTHR34039:SF1">
    <property type="entry name" value="UPF0102 PROTEIN YRAN"/>
    <property type="match status" value="1"/>
</dbReference>
<dbReference type="Pfam" id="PF02021">
    <property type="entry name" value="UPF0102"/>
    <property type="match status" value="1"/>
</dbReference>
<dbReference type="SUPFAM" id="SSF52980">
    <property type="entry name" value="Restriction endonuclease-like"/>
    <property type="match status" value="1"/>
</dbReference>
<reference key="1">
    <citation type="submission" date="2007-05" db="EMBL/GenBank/DDBJ databases">
        <title>Complete sequence of Dehalococcoides sp. BAV1.</title>
        <authorList>
            <consortium name="US DOE Joint Genome Institute"/>
            <person name="Copeland A."/>
            <person name="Lucas S."/>
            <person name="Lapidus A."/>
            <person name="Barry K."/>
            <person name="Detter J.C."/>
            <person name="Glavina del Rio T."/>
            <person name="Hammon N."/>
            <person name="Israni S."/>
            <person name="Pitluck S."/>
            <person name="Lowry S."/>
            <person name="Clum A."/>
            <person name="Schmutz J."/>
            <person name="Larimer F."/>
            <person name="Land M."/>
            <person name="Hauser L."/>
            <person name="Kyrpides N."/>
            <person name="Kim E."/>
            <person name="Ritalahti K.M."/>
            <person name="Loeffler F."/>
            <person name="Richardson P."/>
        </authorList>
    </citation>
    <scope>NUCLEOTIDE SEQUENCE [LARGE SCALE GENOMIC DNA]</scope>
    <source>
        <strain>ATCC BAA-2100 / JCM 16839 / KCTC 5957 / BAV1</strain>
    </source>
</reference>